<sequence>MEFDFDVHKIFLEPITKLDSSLIPSRRPLIASSEAQKQIMTVIDEIGKASAKAQRLPAPITSASRMQTNKHHLYILKDCTPKTAGRGAVIGFLKVGCKKLFVLDQKGSHIEAEPLCILDFYIHETLQRHGFGKELFTFMLKNEQVDVHHLAIDRPSEKFLSFLRKHFNLWSTIPQVNNFVVFDGFFRDWKASVKKTPAKRTEGEIKPYSLTDRDFLKQEEGLPWPFSQSQLNLNRASSLGSSPTRACSRHSPGEEDFVKSLRNCRPHSLHRTANSEQEDHSQRRRTSSLNRPQSIHH</sequence>
<keyword id="KW-0012">Acyltransferase</keyword>
<keyword id="KW-0965">Cell junction</keyword>
<keyword id="KW-0966">Cell projection</keyword>
<keyword id="KW-0168">Coated pit</keyword>
<keyword id="KW-0963">Cytoplasm</keyword>
<keyword id="KW-0206">Cytoskeleton</keyword>
<keyword id="KW-0472">Membrane</keyword>
<keyword id="KW-1185">Reference proteome</keyword>
<keyword id="KW-0808">Transferase</keyword>
<dbReference type="EC" id="2.3.1.108" evidence="1"/>
<dbReference type="EMBL" id="BC167141">
    <property type="protein sequence ID" value="AAI67141.1"/>
    <property type="molecule type" value="mRNA"/>
</dbReference>
<dbReference type="RefSeq" id="NP_001120781.1">
    <property type="nucleotide sequence ID" value="NM_001127309.1"/>
</dbReference>
<dbReference type="SMR" id="B2RZF9"/>
<dbReference type="FunCoup" id="B2RZF9">
    <property type="interactions" value="494"/>
</dbReference>
<dbReference type="STRING" id="8364.ENSXETP00000027979"/>
<dbReference type="PaxDb" id="8364-ENSXETP00000051980"/>
<dbReference type="GeneID" id="100038151"/>
<dbReference type="KEGG" id="xtr:100038151"/>
<dbReference type="AGR" id="Xenbase:XB-GENE-478280"/>
<dbReference type="CTD" id="79969"/>
<dbReference type="Xenbase" id="XB-GENE-478280">
    <property type="gene designation" value="atat1"/>
</dbReference>
<dbReference type="eggNOG" id="KOG4601">
    <property type="taxonomic scope" value="Eukaryota"/>
</dbReference>
<dbReference type="InParanoid" id="B2RZF9"/>
<dbReference type="OrthoDB" id="447510at2759"/>
<dbReference type="Reactome" id="R-XTR-5617833">
    <property type="pathway name" value="Cilium Assembly"/>
</dbReference>
<dbReference type="Proteomes" id="UP000008143">
    <property type="component" value="Chromosome 8"/>
</dbReference>
<dbReference type="Bgee" id="ENSXETG00000024089">
    <property type="expression patterns" value="Expressed in brain and 14 other cell types or tissues"/>
</dbReference>
<dbReference type="ExpressionAtlas" id="B2RZF9">
    <property type="expression patterns" value="differential"/>
</dbReference>
<dbReference type="GO" id="GO:0030424">
    <property type="term" value="C:axon"/>
    <property type="evidence" value="ECO:0007669"/>
    <property type="project" value="UniProtKB-SubCell"/>
</dbReference>
<dbReference type="GO" id="GO:0005905">
    <property type="term" value="C:clathrin-coated pit"/>
    <property type="evidence" value="ECO:0007669"/>
    <property type="project" value="UniProtKB-SubCell"/>
</dbReference>
<dbReference type="GO" id="GO:0005737">
    <property type="term" value="C:cytoplasm"/>
    <property type="evidence" value="ECO:0007669"/>
    <property type="project" value="UniProtKB-SubCell"/>
</dbReference>
<dbReference type="GO" id="GO:0005925">
    <property type="term" value="C:focal adhesion"/>
    <property type="evidence" value="ECO:0007669"/>
    <property type="project" value="UniProtKB-SubCell"/>
</dbReference>
<dbReference type="GO" id="GO:0005874">
    <property type="term" value="C:microtubule"/>
    <property type="evidence" value="ECO:0007669"/>
    <property type="project" value="InterPro"/>
</dbReference>
<dbReference type="GO" id="GO:0005819">
    <property type="term" value="C:spindle"/>
    <property type="evidence" value="ECO:0007669"/>
    <property type="project" value="UniProtKB-SubCell"/>
</dbReference>
<dbReference type="GO" id="GO:0004468">
    <property type="term" value="F:L-lysine N-acetyltransferase activity, acting on acetyl phosphate as donor"/>
    <property type="evidence" value="ECO:0000250"/>
    <property type="project" value="UniProtKB"/>
</dbReference>
<dbReference type="GO" id="GO:0019799">
    <property type="term" value="F:tubulin N-acetyltransferase activity"/>
    <property type="evidence" value="ECO:0000250"/>
    <property type="project" value="UniProtKB"/>
</dbReference>
<dbReference type="GO" id="GO:0071929">
    <property type="term" value="P:alpha-tubulin acetylation"/>
    <property type="evidence" value="ECO:0000250"/>
    <property type="project" value="UniProtKB"/>
</dbReference>
<dbReference type="GO" id="GO:0048666">
    <property type="term" value="P:neuron development"/>
    <property type="evidence" value="ECO:0007669"/>
    <property type="project" value="UniProtKB-UniRule"/>
</dbReference>
<dbReference type="GO" id="GO:0070507">
    <property type="term" value="P:regulation of microtubule cytoskeleton organization"/>
    <property type="evidence" value="ECO:0007669"/>
    <property type="project" value="UniProtKB-UniRule"/>
</dbReference>
<dbReference type="FunFam" id="3.40.630.30:FF:000060">
    <property type="entry name" value="Alpha-tubulin N-acetyltransferase 1"/>
    <property type="match status" value="1"/>
</dbReference>
<dbReference type="Gene3D" id="3.40.630.30">
    <property type="match status" value="1"/>
</dbReference>
<dbReference type="Gene3D" id="6.20.370.120">
    <property type="match status" value="1"/>
</dbReference>
<dbReference type="HAMAP" id="MF_03130">
    <property type="entry name" value="mec17"/>
    <property type="match status" value="1"/>
</dbReference>
<dbReference type="InterPro" id="IPR038746">
    <property type="entry name" value="Atat"/>
</dbReference>
<dbReference type="InterPro" id="IPR007965">
    <property type="entry name" value="GNAT_ATAT"/>
</dbReference>
<dbReference type="PANTHER" id="PTHR12327">
    <property type="entry name" value="ALPHA-TUBULIN N-ACETYLTRANSFERASE 1"/>
    <property type="match status" value="1"/>
</dbReference>
<dbReference type="PANTHER" id="PTHR12327:SF0">
    <property type="entry name" value="ALPHA-TUBULIN N-ACETYLTRANSFERASE 1"/>
    <property type="match status" value="1"/>
</dbReference>
<dbReference type="Pfam" id="PF05301">
    <property type="entry name" value="Acetyltransf_16"/>
    <property type="match status" value="1"/>
</dbReference>
<dbReference type="PROSITE" id="PS51730">
    <property type="entry name" value="GNAT_ATAT"/>
    <property type="match status" value="1"/>
</dbReference>
<organism>
    <name type="scientific">Xenopus tropicalis</name>
    <name type="common">Western clawed frog</name>
    <name type="synonym">Silurana tropicalis</name>
    <dbReference type="NCBI Taxonomy" id="8364"/>
    <lineage>
        <taxon>Eukaryota</taxon>
        <taxon>Metazoa</taxon>
        <taxon>Chordata</taxon>
        <taxon>Craniata</taxon>
        <taxon>Vertebrata</taxon>
        <taxon>Euteleostomi</taxon>
        <taxon>Amphibia</taxon>
        <taxon>Batrachia</taxon>
        <taxon>Anura</taxon>
        <taxon>Pipoidea</taxon>
        <taxon>Pipidae</taxon>
        <taxon>Xenopodinae</taxon>
        <taxon>Xenopus</taxon>
        <taxon>Silurana</taxon>
    </lineage>
</organism>
<evidence type="ECO:0000255" key="1">
    <source>
        <dbReference type="HAMAP-Rule" id="MF_03130"/>
    </source>
</evidence>
<evidence type="ECO:0000256" key="2">
    <source>
        <dbReference type="SAM" id="MobiDB-lite"/>
    </source>
</evidence>
<gene>
    <name evidence="1" type="primary">atat1</name>
    <name type="synonym">mec17</name>
</gene>
<protein>
    <recommendedName>
        <fullName evidence="1">Alpha-tubulin N-acetyltransferase 1</fullName>
        <shortName evidence="1">Alpha-TAT</shortName>
        <shortName evidence="1">Alpha-TAT1</shortName>
        <shortName evidence="1">TAT</shortName>
        <ecNumber evidence="1">2.3.1.108</ecNumber>
    </recommendedName>
    <alternativeName>
        <fullName evidence="1">Acetyltransferase mec-17 homolog</fullName>
    </alternativeName>
</protein>
<proteinExistence type="evidence at transcript level"/>
<name>ATAT_XENTR</name>
<comment type="function">
    <text evidence="1">Specifically acetylates 'Lys-40' in alpha-tubulin on the lumenal side of microtubules. Promotes microtubule destabilization and accelerates microtubule dynamics; this activity may be independent of acetylation activity. Acetylates alpha-tubulin with a slow enzymatic rate, due to a catalytic site that is not optimized for acetyl transfer. Enters the microtubule through each end and diffuses quickly throughout the lumen of microtubules. Acetylates only long/old microtubules because of its slow acetylation rate since it does not have time to act on dynamically unstable microtubules before the enzyme is released. May be involved in neuron development.</text>
</comment>
<comment type="catalytic activity">
    <reaction evidence="1">
        <text>L-lysyl-[alpha-tubulin] + acetyl-CoA = N(6)-acetyl-L-lysyl-[alpha-tubulin] + CoA + H(+)</text>
        <dbReference type="Rhea" id="RHEA:15277"/>
        <dbReference type="Rhea" id="RHEA-COMP:11278"/>
        <dbReference type="Rhea" id="RHEA-COMP:11279"/>
        <dbReference type="ChEBI" id="CHEBI:15378"/>
        <dbReference type="ChEBI" id="CHEBI:29969"/>
        <dbReference type="ChEBI" id="CHEBI:57287"/>
        <dbReference type="ChEBI" id="CHEBI:57288"/>
        <dbReference type="ChEBI" id="CHEBI:61930"/>
        <dbReference type="EC" id="2.3.1.108"/>
    </reaction>
</comment>
<comment type="subcellular location">
    <subcellularLocation>
        <location evidence="1">Cytoplasm</location>
    </subcellularLocation>
    <subcellularLocation>
        <location evidence="1">Membrane</location>
        <location evidence="1">Clathrin-coated pit</location>
    </subcellularLocation>
    <subcellularLocation>
        <location evidence="1">Cell junction</location>
        <location evidence="1">Focal adhesion</location>
    </subcellularLocation>
    <subcellularLocation>
        <location evidence="1">Cell projection</location>
        <location evidence="1">Axon</location>
    </subcellularLocation>
    <subcellularLocation>
        <location evidence="1">Cytoplasm</location>
        <location evidence="1">Cytoskeleton</location>
    </subcellularLocation>
    <subcellularLocation>
        <location evidence="1">Cytoplasm</location>
        <location evidence="1">Cytoskeleton</location>
        <location evidence="1">Spindle</location>
    </subcellularLocation>
</comment>
<comment type="similarity">
    <text evidence="1">Belongs to the acetyltransferase ATAT1 family.</text>
</comment>
<feature type="chain" id="PRO_0000402069" description="Alpha-tubulin N-acetyltransferase 1">
    <location>
        <begin position="1"/>
        <end position="297"/>
    </location>
</feature>
<feature type="domain" description="N-acetyltransferase" evidence="1">
    <location>
        <begin position="1"/>
        <end position="186"/>
    </location>
</feature>
<feature type="region of interest" description="Disordered" evidence="2">
    <location>
        <begin position="269"/>
        <end position="297"/>
    </location>
</feature>
<feature type="compositionally biased region" description="Polar residues" evidence="2">
    <location>
        <begin position="287"/>
        <end position="297"/>
    </location>
</feature>
<feature type="binding site" evidence="1">
    <location>
        <begin position="120"/>
        <end position="133"/>
    </location>
    <ligand>
        <name>acetyl-CoA</name>
        <dbReference type="ChEBI" id="CHEBI:57288"/>
    </ligand>
</feature>
<feature type="binding site" evidence="1">
    <location>
        <begin position="156"/>
        <end position="165"/>
    </location>
    <ligand>
        <name>acetyl-CoA</name>
        <dbReference type="ChEBI" id="CHEBI:57288"/>
    </ligand>
</feature>
<feature type="site" description="Crucial for catalytic activity" evidence="1">
    <location>
        <position position="54"/>
    </location>
</feature>
<accession>B2RZF9</accession>
<reference key="1">
    <citation type="submission" date="2008-05" db="EMBL/GenBank/DDBJ databases">
        <authorList>
            <consortium name="NIH - Xenopus Gene Collection (XGC) project"/>
        </authorList>
    </citation>
    <scope>NUCLEOTIDE SEQUENCE [LARGE SCALE MRNA]</scope>
    <source>
        <strain>PopA</strain>
    </source>
</reference>